<comment type="function">
    <text evidence="7 9">Catalyzes the synthesis of cyclic-di-GMP (c-di-GMP) via the condensation of 2 GTP molecules (PubMed:20946878). Important for the regulation of biofilm maintenance when exposed to peroxide (PubMed:34694901).</text>
</comment>
<comment type="function">
    <text evidence="1">Part of the YfiB-TpbB-YfiR (or yfiBNR) system, encoding a tripartite signaling module that modulates intracellular c-di-GMP levels. The system is a key regulator of the small colony variant (SCV) phenotype, and plays an important role in biofilm formation and in vivo persistence. The c-di-GMP produced by TpbB/YfiN stimulates the production of the Pel and Psl exopolysaccharides, which promotes surface attachment, generates an SCV phenotype and confers resistance against phagocytosis.</text>
</comment>
<comment type="catalytic activity">
    <reaction evidence="7">
        <text>2 GTP = 3',3'-c-di-GMP + 2 diphosphate</text>
        <dbReference type="Rhea" id="RHEA:24898"/>
        <dbReference type="ChEBI" id="CHEBI:33019"/>
        <dbReference type="ChEBI" id="CHEBI:37565"/>
        <dbReference type="ChEBI" id="CHEBI:58805"/>
        <dbReference type="EC" id="2.7.7.65"/>
    </reaction>
    <physiologicalReaction direction="left-to-right" evidence="7">
        <dbReference type="Rhea" id="RHEA:24899"/>
    </physiologicalReaction>
</comment>
<comment type="cofactor">
    <cofactor evidence="1">
        <name>Mg(2+)</name>
        <dbReference type="ChEBI" id="CHEBI:18420"/>
    </cofactor>
    <text evidence="1">Binds 1 Mg(2+) ion per monomer.</text>
</comment>
<comment type="activity regulation">
    <text evidence="1 7">Activity is tightly controlled by YfiR, a small periplasmic protein, and the OmpA/Pal-like outer-membrane lipoprotein YfiB (By similarity). Diguanylate cyclase activity is inhibited by the specific interaction of YfiR with the TpbB periplasmic domain and is activated by YfiB, which releases the YfiR-mediated repression through sequestration of YfiR to the outer membrane (By similarity). Activity is also controlled by dephosphorylation of the periplasmic domain by the tyrosine phosphatase TpbA (PubMed:20946878).</text>
</comment>
<comment type="pathway">
    <text evidence="12">Purine metabolism; 3',5'-cyclic di-GMP biosynthesis.</text>
</comment>
<comment type="subcellular location">
    <subcellularLocation>
        <location evidence="12">Cell inner membrane</location>
        <topology evidence="2">Multi-pass membrane protein</topology>
    </subcellularLocation>
</comment>
<comment type="PTM">
    <text evidence="7">Phosphorylated at both Tyr residues and Ser/Thr residues (PubMed:20946878). Dephosphorylated and inactivated by TpbA (PubMed:20946878).</text>
</comment>
<comment type="disruption phenotype">
    <text evidence="6 8 9">Static biofilms of the disruption mutant exhibit a maintenance defect, which can be further exacerbated by exposure to peroxide (PubMed:34694901). The mutant biofilms produce less c-di-GMP than wild-type strain and exposure to peroxide enhances motility of surface-associated bacteria and increases cell death of the mutant (PubMed:34694901). Inactivation of the gene suppresses the phenotypes observed in the tpbA mutant (PubMed:19543378, PubMed:23766119).</text>
</comment>
<name>TPBB_PSEAB</name>
<gene>
    <name evidence="10" type="primary">tpbB</name>
    <name evidence="11" type="synonym">yfiN</name>
    <name evidence="13" type="ordered locus">PA14_49890</name>
</gene>
<accession>A0A0H2Z7X0</accession>
<organism>
    <name type="scientific">Pseudomonas aeruginosa (strain UCBPP-PA14)</name>
    <dbReference type="NCBI Taxonomy" id="208963"/>
    <lineage>
        <taxon>Bacteria</taxon>
        <taxon>Pseudomonadati</taxon>
        <taxon>Pseudomonadota</taxon>
        <taxon>Gammaproteobacteria</taxon>
        <taxon>Pseudomonadales</taxon>
        <taxon>Pseudomonadaceae</taxon>
        <taxon>Pseudomonas</taxon>
    </lineage>
</organism>
<keyword id="KW-0997">Cell inner membrane</keyword>
<keyword id="KW-1003">Cell membrane</keyword>
<keyword id="KW-0342">GTP-binding</keyword>
<keyword id="KW-0460">Magnesium</keyword>
<keyword id="KW-0472">Membrane</keyword>
<keyword id="KW-0479">Metal-binding</keyword>
<keyword id="KW-0547">Nucleotide-binding</keyword>
<keyword id="KW-0597">Phosphoprotein</keyword>
<keyword id="KW-0808">Transferase</keyword>
<keyword id="KW-0812">Transmembrane</keyword>
<keyword id="KW-1133">Transmembrane helix</keyword>
<dbReference type="EC" id="2.7.7.65" evidence="7"/>
<dbReference type="EMBL" id="CP000438">
    <property type="protein sequence ID" value="ABJ10287.1"/>
    <property type="molecule type" value="Genomic_DNA"/>
</dbReference>
<dbReference type="RefSeq" id="WP_003116327.1">
    <property type="nucleotide sequence ID" value="NZ_CP034244.1"/>
</dbReference>
<dbReference type="SMR" id="A0A0H2Z7X0"/>
<dbReference type="KEGG" id="pau:PA14_49890"/>
<dbReference type="HOGENOM" id="CLU_039310_2_1_6"/>
<dbReference type="BioCyc" id="PAER208963:G1G74-4190-MONOMER"/>
<dbReference type="UniPathway" id="UPA00599"/>
<dbReference type="Proteomes" id="UP000000653">
    <property type="component" value="Chromosome"/>
</dbReference>
<dbReference type="GO" id="GO:0005886">
    <property type="term" value="C:plasma membrane"/>
    <property type="evidence" value="ECO:0007669"/>
    <property type="project" value="UniProtKB-SubCell"/>
</dbReference>
<dbReference type="GO" id="GO:0005525">
    <property type="term" value="F:GTP binding"/>
    <property type="evidence" value="ECO:0007669"/>
    <property type="project" value="UniProtKB-KW"/>
</dbReference>
<dbReference type="GO" id="GO:0046872">
    <property type="term" value="F:metal ion binding"/>
    <property type="evidence" value="ECO:0007669"/>
    <property type="project" value="UniProtKB-KW"/>
</dbReference>
<dbReference type="GO" id="GO:0016740">
    <property type="term" value="F:transferase activity"/>
    <property type="evidence" value="ECO:0007669"/>
    <property type="project" value="UniProtKB-KW"/>
</dbReference>
<dbReference type="GO" id="GO:0007165">
    <property type="term" value="P:signal transduction"/>
    <property type="evidence" value="ECO:0007669"/>
    <property type="project" value="InterPro"/>
</dbReference>
<dbReference type="CDD" id="cd01949">
    <property type="entry name" value="GGDEF"/>
    <property type="match status" value="1"/>
</dbReference>
<dbReference type="CDD" id="cd06225">
    <property type="entry name" value="HAMP"/>
    <property type="match status" value="1"/>
</dbReference>
<dbReference type="FunFam" id="3.30.70.270:FF:000001">
    <property type="entry name" value="Diguanylate cyclase domain protein"/>
    <property type="match status" value="1"/>
</dbReference>
<dbReference type="Gene3D" id="3.30.70.270">
    <property type="match status" value="1"/>
</dbReference>
<dbReference type="Gene3D" id="6.10.340.10">
    <property type="match status" value="1"/>
</dbReference>
<dbReference type="InterPro" id="IPR033417">
    <property type="entry name" value="CHASE8"/>
</dbReference>
<dbReference type="InterPro" id="IPR052163">
    <property type="entry name" value="DGC-Regulatory_Protein"/>
</dbReference>
<dbReference type="InterPro" id="IPR000160">
    <property type="entry name" value="GGDEF_dom"/>
</dbReference>
<dbReference type="InterPro" id="IPR003660">
    <property type="entry name" value="HAMP_dom"/>
</dbReference>
<dbReference type="InterPro" id="IPR029787">
    <property type="entry name" value="Nucleotide_cyclase"/>
</dbReference>
<dbReference type="InterPro" id="IPR043128">
    <property type="entry name" value="Rev_trsase/Diguanyl_cyclase"/>
</dbReference>
<dbReference type="NCBIfam" id="TIGR00254">
    <property type="entry name" value="GGDEF"/>
    <property type="match status" value="1"/>
</dbReference>
<dbReference type="PANTHER" id="PTHR46663">
    <property type="entry name" value="DIGUANYLATE CYCLASE DGCT-RELATED"/>
    <property type="match status" value="1"/>
</dbReference>
<dbReference type="PANTHER" id="PTHR46663:SF2">
    <property type="entry name" value="GGDEF DOMAIN-CONTAINING PROTEIN"/>
    <property type="match status" value="1"/>
</dbReference>
<dbReference type="Pfam" id="PF17152">
    <property type="entry name" value="CHASE8"/>
    <property type="match status" value="1"/>
</dbReference>
<dbReference type="Pfam" id="PF00990">
    <property type="entry name" value="GGDEF"/>
    <property type="match status" value="1"/>
</dbReference>
<dbReference type="Pfam" id="PF00672">
    <property type="entry name" value="HAMP"/>
    <property type="match status" value="1"/>
</dbReference>
<dbReference type="SMART" id="SM00267">
    <property type="entry name" value="GGDEF"/>
    <property type="match status" value="1"/>
</dbReference>
<dbReference type="SMART" id="SM00304">
    <property type="entry name" value="HAMP"/>
    <property type="match status" value="1"/>
</dbReference>
<dbReference type="SUPFAM" id="SSF55073">
    <property type="entry name" value="Nucleotide cyclase"/>
    <property type="match status" value="1"/>
</dbReference>
<dbReference type="PROSITE" id="PS50887">
    <property type="entry name" value="GGDEF"/>
    <property type="match status" value="1"/>
</dbReference>
<dbReference type="PROSITE" id="PS50885">
    <property type="entry name" value="HAMP"/>
    <property type="match status" value="1"/>
</dbReference>
<protein>
    <recommendedName>
        <fullName evidence="12">Diguanylate cyclase TpbB</fullName>
        <ecNumber evidence="7">2.7.7.65</ecNumber>
    </recommendedName>
</protein>
<reference key="1">
    <citation type="journal article" date="2006" name="Genome Biol.">
        <title>Genomic analysis reveals that Pseudomonas aeruginosa virulence is combinatorial.</title>
        <authorList>
            <person name="Lee D.G."/>
            <person name="Urbach J.M."/>
            <person name="Wu G."/>
            <person name="Liberati N.T."/>
            <person name="Feinbaum R.L."/>
            <person name="Miyata S."/>
            <person name="Diggins L.T."/>
            <person name="He J."/>
            <person name="Saucier M."/>
            <person name="Deziel E."/>
            <person name="Friedman L."/>
            <person name="Li L."/>
            <person name="Grills G."/>
            <person name="Montgomery K."/>
            <person name="Kucherlapati R."/>
            <person name="Rahme L.G."/>
            <person name="Ausubel F.M."/>
        </authorList>
    </citation>
    <scope>NUCLEOTIDE SEQUENCE [LARGE SCALE GENOMIC DNA]</scope>
    <source>
        <strain>UCBPP-PA14</strain>
    </source>
</reference>
<reference key="2">
    <citation type="journal article" date="2009" name="PLoS Pathog.">
        <title>Connecting quorum sensing, c-di-GMP, pel polysaccharide, and biofilm formation in Pseudomonas aeruginosa through tyrosine phosphatase TpbA (PA3885).</title>
        <authorList>
            <person name="Ueda A."/>
            <person name="Wood T.K."/>
        </authorList>
    </citation>
    <scope>DISRUPTION PHENOTYPE</scope>
    <scope>MUTAGENESIS OF TYR-48; TYR-62 AND TYR-95</scope>
    <source>
        <strain>UCBPP-PA14</strain>
    </source>
</reference>
<reference key="3">
    <citation type="journal article" date="2010" name="Biochem. Biophys. Res. Commun.">
        <title>Tyrosine phosphatase TpbA controls rugose colony formation in Pseudomonas aeruginosa by dephosphorylating diguanylate cyclase TpbB.</title>
        <authorList>
            <person name="Pu M."/>
            <person name="Wood T.K."/>
        </authorList>
    </citation>
    <scope>FUNCTION</scope>
    <scope>CATALYTIC ACTIVITY</scope>
    <scope>ACTIVITY REGULATION</scope>
    <scope>PHOSPHORYLATION</scope>
    <scope>DEPHOSPHORYLATION BY TPBA</scope>
    <source>
        <strain>UCBPP-PA14</strain>
    </source>
</reference>
<reference key="4">
    <citation type="journal article" date="2010" name="Environ. Microbiol. Rep.">
        <title>Tyrosine phosphatase TpbA of Pseudomonas aeruginosa controls extracellular DNA via cyclic diguanylic acid concentrations.</title>
        <authorList>
            <person name="Ueda A."/>
            <person name="Wood T.K."/>
        </authorList>
    </citation>
    <scope>DISRUPTION PHENOTYPE</scope>
    <source>
        <strain>UCBPP-PA14</strain>
    </source>
</reference>
<reference key="5">
    <citation type="journal article" date="2022" name="J. Bacteriol.">
        <title>The diguanylate cyclase YfiN of Pseudomonas aeruginosa regulates biofilm maintenance in response to peroxide.</title>
        <authorList>
            <person name="Katharios-Lanwermeyer S."/>
            <person name="Koval S.A."/>
            <person name="Barrack K.E."/>
            <person name="O'Toole G.A."/>
        </authorList>
    </citation>
    <scope>FUNCTION</scope>
    <scope>DISRUPTION PHENOTYPE</scope>
    <source>
        <strain>UCBPP-PA14</strain>
    </source>
</reference>
<sequence>MNRRRRYTGSNPSLRRVLYRAHLGVALVAVFTAGLAVTLVGLLTLRAYADPNQQLIARSISYTVEAAVVFGDAQAAEESLALIASSEEVSSAIVYDRQGQPLASWHRESTGPLHLLEQQLAHWLLSAPTEQPILHDGQKIGSVEVKGSGGSLLRFLLTGFAGMVLCLLLTALGAFYLSRRLVRGIVGPLDQLAKVAHTVRRERDFEKRVPEAGIAELSQLGEDFNALLDELESWQARLQDENASLAHQAHHDSLTSLPNRAFFEGRLSRALRDASEHREQLAVLFIDSDRFKEINDRLGHAAGDTVLVNIAMRIRGQLRESDLVARLGGDEFAVLLAPLASGADALRIADNIIASMQAPIRLSDGSTVSTSLTIGIALYPEHADTPAALLHDADMAMYIAKRQARGSRRLAELNDPRILQEEKEIDSATPEAPPK</sequence>
<feature type="chain" id="PRO_0000458196" description="Diguanylate cyclase TpbB">
    <location>
        <begin position="1"/>
        <end position="435"/>
    </location>
</feature>
<feature type="topological domain" description="Cytoplasmic" evidence="12">
    <location>
        <begin position="1"/>
        <end position="22"/>
    </location>
</feature>
<feature type="transmembrane region" description="Helical" evidence="2">
    <location>
        <begin position="23"/>
        <end position="43"/>
    </location>
</feature>
<feature type="topological domain" description="Periplasmic" evidence="12">
    <location>
        <begin position="44"/>
        <end position="154"/>
    </location>
</feature>
<feature type="transmembrane region" description="Helical" evidence="2">
    <location>
        <begin position="155"/>
        <end position="175"/>
    </location>
</feature>
<feature type="topological domain" description="Cytoplasmic" evidence="12">
    <location>
        <begin position="176"/>
        <end position="435"/>
    </location>
</feature>
<feature type="domain" description="HAMP" evidence="4">
    <location>
        <begin position="183"/>
        <end position="236"/>
    </location>
</feature>
<feature type="domain" description="GGDEF" evidence="3">
    <location>
        <begin position="279"/>
        <end position="415"/>
    </location>
</feature>
<feature type="region of interest" description="Disordered" evidence="5">
    <location>
        <begin position="414"/>
        <end position="435"/>
    </location>
</feature>
<feature type="compositionally biased region" description="Basic and acidic residues" evidence="5">
    <location>
        <begin position="414"/>
        <end position="426"/>
    </location>
</feature>
<feature type="active site" description="Proton acceptor" evidence="2">
    <location>
        <position position="330"/>
    </location>
</feature>
<feature type="binding site" evidence="1">
    <location>
        <position position="288"/>
    </location>
    <ligand>
        <name>Mg(2+)</name>
        <dbReference type="ChEBI" id="CHEBI:18420"/>
    </ligand>
</feature>
<feature type="binding site" evidence="1">
    <location>
        <position position="330"/>
    </location>
    <ligand>
        <name>Mg(2+)</name>
        <dbReference type="ChEBI" id="CHEBI:18420"/>
    </ligand>
</feature>
<feature type="mutagenesis site" description="Decreases aggregation for 43% of the cultures." evidence="6">
    <original>Y</original>
    <variation>F</variation>
    <location>
        <position position="48"/>
    </location>
</feature>
<feature type="mutagenesis site" description="Decreases aggregation for 24% of the cultures." evidence="6">
    <original>Y</original>
    <variation>F</variation>
    <location>
        <position position="62"/>
    </location>
</feature>
<feature type="mutagenesis site" description="Does not affect aggregation." evidence="6">
    <original>Y</original>
    <variation>F</variation>
    <location>
        <position position="95"/>
    </location>
</feature>
<proteinExistence type="evidence at protein level"/>
<evidence type="ECO:0000250" key="1">
    <source>
        <dbReference type="UniProtKB" id="Q9I4L5"/>
    </source>
</evidence>
<evidence type="ECO:0000255" key="2"/>
<evidence type="ECO:0000255" key="3">
    <source>
        <dbReference type="PROSITE-ProRule" id="PRU00095"/>
    </source>
</evidence>
<evidence type="ECO:0000255" key="4">
    <source>
        <dbReference type="PROSITE-ProRule" id="PRU00102"/>
    </source>
</evidence>
<evidence type="ECO:0000256" key="5">
    <source>
        <dbReference type="SAM" id="MobiDB-lite"/>
    </source>
</evidence>
<evidence type="ECO:0000269" key="6">
    <source>
    </source>
</evidence>
<evidence type="ECO:0000269" key="7">
    <source>
    </source>
</evidence>
<evidence type="ECO:0000269" key="8">
    <source>
    </source>
</evidence>
<evidence type="ECO:0000269" key="9">
    <source>
    </source>
</evidence>
<evidence type="ECO:0000303" key="10">
    <source>
    </source>
</evidence>
<evidence type="ECO:0000303" key="11">
    <source>
    </source>
</evidence>
<evidence type="ECO:0000305" key="12"/>
<evidence type="ECO:0000312" key="13">
    <source>
        <dbReference type="EMBL" id="ABJ10287.1"/>
    </source>
</evidence>